<comment type="catalytic activity">
    <reaction evidence="1">
        <text>1-(2-carboxyphenylamino)-1-deoxy-D-ribulose 5-phosphate + H(+) = (1S,2R)-1-C-(indol-3-yl)glycerol 3-phosphate + CO2 + H2O</text>
        <dbReference type="Rhea" id="RHEA:23476"/>
        <dbReference type="ChEBI" id="CHEBI:15377"/>
        <dbReference type="ChEBI" id="CHEBI:15378"/>
        <dbReference type="ChEBI" id="CHEBI:16526"/>
        <dbReference type="ChEBI" id="CHEBI:58613"/>
        <dbReference type="ChEBI" id="CHEBI:58866"/>
        <dbReference type="EC" id="4.1.1.48"/>
    </reaction>
</comment>
<comment type="pathway">
    <text evidence="1">Amino-acid biosynthesis; L-tryptophan biosynthesis; L-tryptophan from chorismate: step 4/5.</text>
</comment>
<comment type="similarity">
    <text evidence="1">Belongs to the TrpC family.</text>
</comment>
<keyword id="KW-0028">Amino-acid biosynthesis</keyword>
<keyword id="KW-0057">Aromatic amino acid biosynthesis</keyword>
<keyword id="KW-0210">Decarboxylase</keyword>
<keyword id="KW-0456">Lyase</keyword>
<keyword id="KW-0822">Tryptophan biosynthesis</keyword>
<evidence type="ECO:0000255" key="1">
    <source>
        <dbReference type="HAMAP-Rule" id="MF_00134"/>
    </source>
</evidence>
<protein>
    <recommendedName>
        <fullName evidence="1">Indole-3-glycerol phosphate synthase</fullName>
        <shortName evidence="1">IGPS</shortName>
        <ecNumber evidence="1">4.1.1.48</ecNumber>
    </recommendedName>
</protein>
<reference key="1">
    <citation type="journal article" date="2003" name="Nat. Genet.">
        <title>Comparative analysis of the genome sequences of Bordetella pertussis, Bordetella parapertussis and Bordetella bronchiseptica.</title>
        <authorList>
            <person name="Parkhill J."/>
            <person name="Sebaihia M."/>
            <person name="Preston A."/>
            <person name="Murphy L.D."/>
            <person name="Thomson N.R."/>
            <person name="Harris D.E."/>
            <person name="Holden M.T.G."/>
            <person name="Churcher C.M."/>
            <person name="Bentley S.D."/>
            <person name="Mungall K.L."/>
            <person name="Cerdeno-Tarraga A.-M."/>
            <person name="Temple L."/>
            <person name="James K.D."/>
            <person name="Harris B."/>
            <person name="Quail M.A."/>
            <person name="Achtman M."/>
            <person name="Atkin R."/>
            <person name="Baker S."/>
            <person name="Basham D."/>
            <person name="Bason N."/>
            <person name="Cherevach I."/>
            <person name="Chillingworth T."/>
            <person name="Collins M."/>
            <person name="Cronin A."/>
            <person name="Davis P."/>
            <person name="Doggett J."/>
            <person name="Feltwell T."/>
            <person name="Goble A."/>
            <person name="Hamlin N."/>
            <person name="Hauser H."/>
            <person name="Holroyd S."/>
            <person name="Jagels K."/>
            <person name="Leather S."/>
            <person name="Moule S."/>
            <person name="Norberczak H."/>
            <person name="O'Neil S."/>
            <person name="Ormond D."/>
            <person name="Price C."/>
            <person name="Rabbinowitsch E."/>
            <person name="Rutter S."/>
            <person name="Sanders M."/>
            <person name="Saunders D."/>
            <person name="Seeger K."/>
            <person name="Sharp S."/>
            <person name="Simmonds M."/>
            <person name="Skelton J."/>
            <person name="Squares R."/>
            <person name="Squares S."/>
            <person name="Stevens K."/>
            <person name="Unwin L."/>
            <person name="Whitehead S."/>
            <person name="Barrell B.G."/>
            <person name="Maskell D.J."/>
        </authorList>
    </citation>
    <scope>NUCLEOTIDE SEQUENCE [LARGE SCALE GENOMIC DNA]</scope>
    <source>
        <strain>12822 / ATCC BAA-587 / NCTC 13253</strain>
    </source>
</reference>
<dbReference type="EC" id="4.1.1.48" evidence="1"/>
<dbReference type="EMBL" id="BX640435">
    <property type="protein sequence ID" value="CAE39438.1"/>
    <property type="molecule type" value="Genomic_DNA"/>
</dbReference>
<dbReference type="RefSeq" id="WP_003815394.1">
    <property type="nucleotide sequence ID" value="NC_002928.3"/>
</dbReference>
<dbReference type="SMR" id="Q7W387"/>
<dbReference type="GeneID" id="93205955"/>
<dbReference type="KEGG" id="bpa:BPP4159"/>
<dbReference type="HOGENOM" id="CLU_034247_2_0_4"/>
<dbReference type="UniPathway" id="UPA00035">
    <property type="reaction ID" value="UER00043"/>
</dbReference>
<dbReference type="Proteomes" id="UP000001421">
    <property type="component" value="Chromosome"/>
</dbReference>
<dbReference type="GO" id="GO:0004425">
    <property type="term" value="F:indole-3-glycerol-phosphate synthase activity"/>
    <property type="evidence" value="ECO:0007669"/>
    <property type="project" value="UniProtKB-UniRule"/>
</dbReference>
<dbReference type="GO" id="GO:0004640">
    <property type="term" value="F:phosphoribosylanthranilate isomerase activity"/>
    <property type="evidence" value="ECO:0007669"/>
    <property type="project" value="TreeGrafter"/>
</dbReference>
<dbReference type="GO" id="GO:0000162">
    <property type="term" value="P:L-tryptophan biosynthetic process"/>
    <property type="evidence" value="ECO:0007669"/>
    <property type="project" value="UniProtKB-UniRule"/>
</dbReference>
<dbReference type="CDD" id="cd00331">
    <property type="entry name" value="IGPS"/>
    <property type="match status" value="1"/>
</dbReference>
<dbReference type="FunFam" id="3.20.20.70:FF:000024">
    <property type="entry name" value="Indole-3-glycerol phosphate synthase"/>
    <property type="match status" value="1"/>
</dbReference>
<dbReference type="Gene3D" id="3.20.20.70">
    <property type="entry name" value="Aldolase class I"/>
    <property type="match status" value="1"/>
</dbReference>
<dbReference type="HAMAP" id="MF_00134_B">
    <property type="entry name" value="IGPS_B"/>
    <property type="match status" value="1"/>
</dbReference>
<dbReference type="InterPro" id="IPR013785">
    <property type="entry name" value="Aldolase_TIM"/>
</dbReference>
<dbReference type="InterPro" id="IPR045186">
    <property type="entry name" value="Indole-3-glycerol_P_synth"/>
</dbReference>
<dbReference type="InterPro" id="IPR013798">
    <property type="entry name" value="Indole-3-glycerol_P_synth_dom"/>
</dbReference>
<dbReference type="InterPro" id="IPR001468">
    <property type="entry name" value="Indole-3-GlycerolPSynthase_CS"/>
</dbReference>
<dbReference type="InterPro" id="IPR011060">
    <property type="entry name" value="RibuloseP-bd_barrel"/>
</dbReference>
<dbReference type="NCBIfam" id="NF001370">
    <property type="entry name" value="PRK00278.1-2"/>
    <property type="match status" value="1"/>
</dbReference>
<dbReference type="NCBIfam" id="NF001373">
    <property type="entry name" value="PRK00278.1-6"/>
    <property type="match status" value="1"/>
</dbReference>
<dbReference type="NCBIfam" id="NF001377">
    <property type="entry name" value="PRK00278.2-4"/>
    <property type="match status" value="1"/>
</dbReference>
<dbReference type="PANTHER" id="PTHR22854:SF2">
    <property type="entry name" value="INDOLE-3-GLYCEROL-PHOSPHATE SYNTHASE"/>
    <property type="match status" value="1"/>
</dbReference>
<dbReference type="PANTHER" id="PTHR22854">
    <property type="entry name" value="TRYPTOPHAN BIOSYNTHESIS PROTEIN"/>
    <property type="match status" value="1"/>
</dbReference>
<dbReference type="Pfam" id="PF00218">
    <property type="entry name" value="IGPS"/>
    <property type="match status" value="1"/>
</dbReference>
<dbReference type="SUPFAM" id="SSF51366">
    <property type="entry name" value="Ribulose-phoshate binding barrel"/>
    <property type="match status" value="1"/>
</dbReference>
<dbReference type="PROSITE" id="PS00614">
    <property type="entry name" value="IGPS"/>
    <property type="match status" value="1"/>
</dbReference>
<name>TRPC_BORPA</name>
<sequence>MNDILAKILAVKAEEVATARQMRSEAELLREAQARQDVRGFAQAIEDKISQGKAGVIAEIKKASPSKGVLRENFDPAEIAASYAMHGAACLSVLTDVQFFQGSHDNLRRARAACSLPVLRKDFIIDPYQIISARAMGADCVLLIVAALAPAQLRDLETLAIDLGMDVLVEVHDAKELDAALALRTPLIGINNRNLRTFETTLQTTLDLLPMIPAGKRVVTESGILKPEDVRLMREHDVQAFLVGEAFMRANDPGVELARLVA</sequence>
<proteinExistence type="inferred from homology"/>
<organism>
    <name type="scientific">Bordetella parapertussis (strain 12822 / ATCC BAA-587 / NCTC 13253)</name>
    <dbReference type="NCBI Taxonomy" id="257311"/>
    <lineage>
        <taxon>Bacteria</taxon>
        <taxon>Pseudomonadati</taxon>
        <taxon>Pseudomonadota</taxon>
        <taxon>Betaproteobacteria</taxon>
        <taxon>Burkholderiales</taxon>
        <taxon>Alcaligenaceae</taxon>
        <taxon>Bordetella</taxon>
    </lineage>
</organism>
<feature type="chain" id="PRO_1000018444" description="Indole-3-glycerol phosphate synthase">
    <location>
        <begin position="1"/>
        <end position="262"/>
    </location>
</feature>
<gene>
    <name evidence="1" type="primary">trpC</name>
    <name type="ordered locus">BPP4159</name>
</gene>
<accession>Q7W387</accession>